<sequence>MARYLGPKLKLSRREGTDLFLKSGVRAIDTKCKIEQAPGQHGARKPRLSDYGVQLREKQKVRRIYGVLERQFRNYYKEAARLKGNTGENLLALLEGRLDNVVYRMGFGATRAEARQLVSHKAIMVNGRVVNIASYQVSPNDVVSIREKAKKQSRVKAALELAEQREKPTWLEVDAGKMEGTYKRKPERSDLSADINEHLIVELYSK</sequence>
<gene>
    <name evidence="1" type="primary">rpsD</name>
    <name type="ordered locus">SeHA_C3719</name>
</gene>
<proteinExistence type="inferred from homology"/>
<reference key="1">
    <citation type="journal article" date="2011" name="J. Bacteriol.">
        <title>Comparative genomics of 28 Salmonella enterica isolates: evidence for CRISPR-mediated adaptive sublineage evolution.</title>
        <authorList>
            <person name="Fricke W.F."/>
            <person name="Mammel M.K."/>
            <person name="McDermott P.F."/>
            <person name="Tartera C."/>
            <person name="White D.G."/>
            <person name="Leclerc J.E."/>
            <person name="Ravel J."/>
            <person name="Cebula T.A."/>
        </authorList>
    </citation>
    <scope>NUCLEOTIDE SEQUENCE [LARGE SCALE GENOMIC DNA]</scope>
    <source>
        <strain>SL476</strain>
    </source>
</reference>
<feature type="chain" id="PRO_1000140788" description="Small ribosomal subunit protein uS4">
    <location>
        <begin position="1"/>
        <end position="206"/>
    </location>
</feature>
<feature type="domain" description="S4 RNA-binding" evidence="1">
    <location>
        <begin position="96"/>
        <end position="156"/>
    </location>
</feature>
<keyword id="KW-0687">Ribonucleoprotein</keyword>
<keyword id="KW-0689">Ribosomal protein</keyword>
<keyword id="KW-0694">RNA-binding</keyword>
<keyword id="KW-0699">rRNA-binding</keyword>
<dbReference type="EMBL" id="CP001120">
    <property type="protein sequence ID" value="ACF66461.1"/>
    <property type="molecule type" value="Genomic_DNA"/>
</dbReference>
<dbReference type="RefSeq" id="WP_000135226.1">
    <property type="nucleotide sequence ID" value="NC_011083.1"/>
</dbReference>
<dbReference type="SMR" id="B4TJY6"/>
<dbReference type="GeneID" id="93035755"/>
<dbReference type="KEGG" id="seh:SeHA_C3719"/>
<dbReference type="HOGENOM" id="CLU_092403_0_2_6"/>
<dbReference type="Proteomes" id="UP000001866">
    <property type="component" value="Chromosome"/>
</dbReference>
<dbReference type="GO" id="GO:0015935">
    <property type="term" value="C:small ribosomal subunit"/>
    <property type="evidence" value="ECO:0007669"/>
    <property type="project" value="InterPro"/>
</dbReference>
<dbReference type="GO" id="GO:0019843">
    <property type="term" value="F:rRNA binding"/>
    <property type="evidence" value="ECO:0007669"/>
    <property type="project" value="UniProtKB-UniRule"/>
</dbReference>
<dbReference type="GO" id="GO:0003735">
    <property type="term" value="F:structural constituent of ribosome"/>
    <property type="evidence" value="ECO:0007669"/>
    <property type="project" value="InterPro"/>
</dbReference>
<dbReference type="GO" id="GO:0042274">
    <property type="term" value="P:ribosomal small subunit biogenesis"/>
    <property type="evidence" value="ECO:0007669"/>
    <property type="project" value="TreeGrafter"/>
</dbReference>
<dbReference type="GO" id="GO:0006412">
    <property type="term" value="P:translation"/>
    <property type="evidence" value="ECO:0007669"/>
    <property type="project" value="UniProtKB-UniRule"/>
</dbReference>
<dbReference type="CDD" id="cd00165">
    <property type="entry name" value="S4"/>
    <property type="match status" value="1"/>
</dbReference>
<dbReference type="FunFam" id="1.10.1050.10:FF:000001">
    <property type="entry name" value="30S ribosomal protein S4"/>
    <property type="match status" value="1"/>
</dbReference>
<dbReference type="FunFam" id="3.10.290.10:FF:000001">
    <property type="entry name" value="30S ribosomal protein S4"/>
    <property type="match status" value="1"/>
</dbReference>
<dbReference type="Gene3D" id="1.10.1050.10">
    <property type="entry name" value="Ribosomal Protein S4 Delta 41, Chain A, domain 1"/>
    <property type="match status" value="1"/>
</dbReference>
<dbReference type="Gene3D" id="3.10.290.10">
    <property type="entry name" value="RNA-binding S4 domain"/>
    <property type="match status" value="1"/>
</dbReference>
<dbReference type="HAMAP" id="MF_01306_B">
    <property type="entry name" value="Ribosomal_uS4_B"/>
    <property type="match status" value="1"/>
</dbReference>
<dbReference type="InterPro" id="IPR022801">
    <property type="entry name" value="Ribosomal_uS4"/>
</dbReference>
<dbReference type="InterPro" id="IPR005709">
    <property type="entry name" value="Ribosomal_uS4_bac-type"/>
</dbReference>
<dbReference type="InterPro" id="IPR018079">
    <property type="entry name" value="Ribosomal_uS4_CS"/>
</dbReference>
<dbReference type="InterPro" id="IPR001912">
    <property type="entry name" value="Ribosomal_uS4_N"/>
</dbReference>
<dbReference type="InterPro" id="IPR002942">
    <property type="entry name" value="S4_RNA-bd"/>
</dbReference>
<dbReference type="InterPro" id="IPR036986">
    <property type="entry name" value="S4_RNA-bd_sf"/>
</dbReference>
<dbReference type="NCBIfam" id="NF003717">
    <property type="entry name" value="PRK05327.1"/>
    <property type="match status" value="1"/>
</dbReference>
<dbReference type="NCBIfam" id="TIGR01017">
    <property type="entry name" value="rpsD_bact"/>
    <property type="match status" value="1"/>
</dbReference>
<dbReference type="PANTHER" id="PTHR11831">
    <property type="entry name" value="30S 40S RIBOSOMAL PROTEIN"/>
    <property type="match status" value="1"/>
</dbReference>
<dbReference type="PANTHER" id="PTHR11831:SF4">
    <property type="entry name" value="SMALL RIBOSOMAL SUBUNIT PROTEIN US4M"/>
    <property type="match status" value="1"/>
</dbReference>
<dbReference type="Pfam" id="PF00163">
    <property type="entry name" value="Ribosomal_S4"/>
    <property type="match status" value="1"/>
</dbReference>
<dbReference type="Pfam" id="PF01479">
    <property type="entry name" value="S4"/>
    <property type="match status" value="1"/>
</dbReference>
<dbReference type="SMART" id="SM01390">
    <property type="entry name" value="Ribosomal_S4"/>
    <property type="match status" value="1"/>
</dbReference>
<dbReference type="SMART" id="SM00363">
    <property type="entry name" value="S4"/>
    <property type="match status" value="1"/>
</dbReference>
<dbReference type="SUPFAM" id="SSF55174">
    <property type="entry name" value="Alpha-L RNA-binding motif"/>
    <property type="match status" value="1"/>
</dbReference>
<dbReference type="PROSITE" id="PS00632">
    <property type="entry name" value="RIBOSOMAL_S4"/>
    <property type="match status" value="1"/>
</dbReference>
<dbReference type="PROSITE" id="PS50889">
    <property type="entry name" value="S4"/>
    <property type="match status" value="1"/>
</dbReference>
<accession>B4TJY6</accession>
<evidence type="ECO:0000255" key="1">
    <source>
        <dbReference type="HAMAP-Rule" id="MF_01306"/>
    </source>
</evidence>
<evidence type="ECO:0000305" key="2"/>
<name>RS4_SALHS</name>
<protein>
    <recommendedName>
        <fullName evidence="1">Small ribosomal subunit protein uS4</fullName>
    </recommendedName>
    <alternativeName>
        <fullName evidence="2">30S ribosomal protein S4</fullName>
    </alternativeName>
</protein>
<organism>
    <name type="scientific">Salmonella heidelberg (strain SL476)</name>
    <dbReference type="NCBI Taxonomy" id="454169"/>
    <lineage>
        <taxon>Bacteria</taxon>
        <taxon>Pseudomonadati</taxon>
        <taxon>Pseudomonadota</taxon>
        <taxon>Gammaproteobacteria</taxon>
        <taxon>Enterobacterales</taxon>
        <taxon>Enterobacteriaceae</taxon>
        <taxon>Salmonella</taxon>
    </lineage>
</organism>
<comment type="function">
    <text evidence="1">One of the primary rRNA binding proteins, it binds directly to 16S rRNA where it nucleates assembly of the body of the 30S subunit.</text>
</comment>
<comment type="function">
    <text evidence="1">With S5 and S12 plays an important role in translational accuracy.</text>
</comment>
<comment type="subunit">
    <text evidence="1">Part of the 30S ribosomal subunit. Contacts protein S5. The interaction surface between S4 and S5 is involved in control of translational fidelity.</text>
</comment>
<comment type="similarity">
    <text evidence="1">Belongs to the universal ribosomal protein uS4 family.</text>
</comment>